<comment type="function">
    <text>Destroys superoxide anion radicals which are normally produced within the cells and which are toxic to biological systems.</text>
</comment>
<comment type="catalytic activity">
    <reaction>
        <text>2 superoxide + 2 H(+) = H2O2 + O2</text>
        <dbReference type="Rhea" id="RHEA:20696"/>
        <dbReference type="ChEBI" id="CHEBI:15378"/>
        <dbReference type="ChEBI" id="CHEBI:15379"/>
        <dbReference type="ChEBI" id="CHEBI:16240"/>
        <dbReference type="ChEBI" id="CHEBI:18421"/>
        <dbReference type="EC" id="1.15.1.1"/>
    </reaction>
</comment>
<comment type="cofactor">
    <cofactor evidence="1">
        <name>Mn(2+)</name>
        <dbReference type="ChEBI" id="CHEBI:29035"/>
    </cofactor>
    <text evidence="1">Binds 1 Mn(2+) ion per subunit.</text>
</comment>
<comment type="similarity">
    <text evidence="2">Belongs to the iron/manganese superoxide dismutase family.</text>
</comment>
<proteinExistence type="inferred from homology"/>
<sequence length="138" mass="15066">SHSKHHATYVKGVNDAIAKLEEARANGDHGAIFLHEKNLAFHLGGHVNHTIWWKNLSPHGGDKPTGDLAAAIDDQFGSFDNFRAQFTAAANGLQGSGWAVLGYDTLGDRLLTFQLYDQQANVPLGIIPLLLVDMWEHA</sequence>
<protein>
    <recommendedName>
        <fullName>Superoxide dismutase [Mn]</fullName>
        <ecNumber>1.15.1.1</ecNumber>
    </recommendedName>
</protein>
<feature type="chain" id="PRO_0000160057" description="Superoxide dismutase [Mn]">
    <location>
        <begin position="1" status="less than"/>
        <end position="138" status="greater than"/>
    </location>
</feature>
<feature type="binding site" evidence="1">
    <location>
        <position position="2"/>
    </location>
    <ligand>
        <name>Mn(2+)</name>
        <dbReference type="ChEBI" id="CHEBI:29035"/>
    </ligand>
</feature>
<feature type="binding site" evidence="1">
    <location>
        <position position="49"/>
    </location>
    <ligand>
        <name>Mn(2+)</name>
        <dbReference type="ChEBI" id="CHEBI:29035"/>
    </ligand>
</feature>
<feature type="binding site" evidence="1">
    <location>
        <position position="133"/>
    </location>
    <ligand>
        <name>Mn(2+)</name>
        <dbReference type="ChEBI" id="CHEBI:29035"/>
    </ligand>
</feature>
<feature type="binding site" evidence="1">
    <location>
        <position position="137"/>
    </location>
    <ligand>
        <name>Mn(2+)</name>
        <dbReference type="ChEBI" id="CHEBI:29035"/>
    </ligand>
</feature>
<feature type="non-terminal residue">
    <location>
        <position position="1"/>
    </location>
</feature>
<feature type="non-terminal residue">
    <location>
        <position position="138"/>
    </location>
</feature>
<dbReference type="EC" id="1.15.1.1"/>
<dbReference type="EMBL" id="Z48211">
    <property type="protein sequence ID" value="CAA88244.1"/>
    <property type="molecule type" value="Genomic_DNA"/>
</dbReference>
<dbReference type="PIR" id="S52379">
    <property type="entry name" value="S52379"/>
</dbReference>
<dbReference type="SMR" id="P53648"/>
<dbReference type="STRING" id="1771.MPHLCCUG_00560"/>
<dbReference type="GO" id="GO:0046872">
    <property type="term" value="F:metal ion binding"/>
    <property type="evidence" value="ECO:0007669"/>
    <property type="project" value="UniProtKB-KW"/>
</dbReference>
<dbReference type="GO" id="GO:0004784">
    <property type="term" value="F:superoxide dismutase activity"/>
    <property type="evidence" value="ECO:0007669"/>
    <property type="project" value="UniProtKB-EC"/>
</dbReference>
<dbReference type="Gene3D" id="1.10.287.990">
    <property type="entry name" value="Fe,Mn superoxide dismutase (SOD) domain"/>
    <property type="match status" value="1"/>
</dbReference>
<dbReference type="Gene3D" id="3.55.40.20">
    <property type="entry name" value="Iron/manganese superoxide dismutase, C-terminal domain"/>
    <property type="match status" value="1"/>
</dbReference>
<dbReference type="InterPro" id="IPR050265">
    <property type="entry name" value="Fe/Mn_Superoxide_Dismutase"/>
</dbReference>
<dbReference type="InterPro" id="IPR001189">
    <property type="entry name" value="Mn/Fe_SOD"/>
</dbReference>
<dbReference type="InterPro" id="IPR019832">
    <property type="entry name" value="Mn/Fe_SOD_C"/>
</dbReference>
<dbReference type="InterPro" id="IPR019831">
    <property type="entry name" value="Mn/Fe_SOD_N"/>
</dbReference>
<dbReference type="InterPro" id="IPR036324">
    <property type="entry name" value="Mn/Fe_SOD_N_sf"/>
</dbReference>
<dbReference type="InterPro" id="IPR036314">
    <property type="entry name" value="SOD_C_sf"/>
</dbReference>
<dbReference type="PANTHER" id="PTHR11404">
    <property type="entry name" value="SUPEROXIDE DISMUTASE 2"/>
    <property type="match status" value="1"/>
</dbReference>
<dbReference type="PANTHER" id="PTHR11404:SF6">
    <property type="entry name" value="SUPEROXIDE DISMUTASE [MN], MITOCHONDRIAL"/>
    <property type="match status" value="1"/>
</dbReference>
<dbReference type="Pfam" id="PF02777">
    <property type="entry name" value="Sod_Fe_C"/>
    <property type="match status" value="1"/>
</dbReference>
<dbReference type="Pfam" id="PF00081">
    <property type="entry name" value="Sod_Fe_N"/>
    <property type="match status" value="1"/>
</dbReference>
<dbReference type="PRINTS" id="PR01703">
    <property type="entry name" value="MNSODISMTASE"/>
</dbReference>
<dbReference type="SUPFAM" id="SSF54719">
    <property type="entry name" value="Fe,Mn superoxide dismutase (SOD), C-terminal domain"/>
    <property type="match status" value="1"/>
</dbReference>
<dbReference type="SUPFAM" id="SSF46609">
    <property type="entry name" value="Fe,Mn superoxide dismutase (SOD), N-terminal domain"/>
    <property type="match status" value="1"/>
</dbReference>
<name>SODM_MYCPH</name>
<evidence type="ECO:0000250" key="1"/>
<evidence type="ECO:0000305" key="2"/>
<accession>P53648</accession>
<gene>
    <name type="primary">sodA</name>
    <name type="synonym">sod</name>
</gene>
<reference key="1">
    <citation type="journal article" date="1995" name="Clin. Mol. Pathol.">
        <title>Rapid identification of mycobacteria from AIDS patients by capillary electrophoretic profiling of amplified SOD gene.</title>
        <authorList>
            <person name="Bull T.J."/>
            <person name="Shanson D.C."/>
            <person name="Archard L.C."/>
        </authorList>
    </citation>
    <scope>NUCLEOTIDE SEQUENCE [GENOMIC DNA]</scope>
    <source>
        <strain>ATCC 11758 / DSM 43239 / BCRC 10707 / JCM 6385 / NCTC 8151 / NRRL B-14615</strain>
    </source>
</reference>
<organism>
    <name type="scientific">Mycolicibacterium phlei</name>
    <name type="common">Mycobacterium phlei</name>
    <dbReference type="NCBI Taxonomy" id="1771"/>
    <lineage>
        <taxon>Bacteria</taxon>
        <taxon>Bacillati</taxon>
        <taxon>Actinomycetota</taxon>
        <taxon>Actinomycetes</taxon>
        <taxon>Mycobacteriales</taxon>
        <taxon>Mycobacteriaceae</taxon>
        <taxon>Mycolicibacterium</taxon>
    </lineage>
</organism>
<keyword id="KW-0464">Manganese</keyword>
<keyword id="KW-0479">Metal-binding</keyword>
<keyword id="KW-0560">Oxidoreductase</keyword>